<evidence type="ECO:0000255" key="1">
    <source>
        <dbReference type="HAMAP-Rule" id="MF_01384"/>
    </source>
</evidence>
<gene>
    <name evidence="1" type="primary">ureD</name>
    <name type="ordered locus">YPA_2398</name>
</gene>
<dbReference type="EMBL" id="CP000308">
    <property type="protein sequence ID" value="ABG14363.1"/>
    <property type="molecule type" value="Genomic_DNA"/>
</dbReference>
<dbReference type="RefSeq" id="WP_002228375.1">
    <property type="nucleotide sequence ID" value="NZ_CP009906.1"/>
</dbReference>
<dbReference type="SMR" id="Q1C5A9"/>
<dbReference type="KEGG" id="ypa:YPA_2398"/>
<dbReference type="Proteomes" id="UP000001971">
    <property type="component" value="Chromosome"/>
</dbReference>
<dbReference type="GO" id="GO:0005737">
    <property type="term" value="C:cytoplasm"/>
    <property type="evidence" value="ECO:0007669"/>
    <property type="project" value="UniProtKB-SubCell"/>
</dbReference>
<dbReference type="GO" id="GO:0016151">
    <property type="term" value="F:nickel cation binding"/>
    <property type="evidence" value="ECO:0007669"/>
    <property type="project" value="UniProtKB-UniRule"/>
</dbReference>
<dbReference type="HAMAP" id="MF_01384">
    <property type="entry name" value="UreD"/>
    <property type="match status" value="1"/>
</dbReference>
<dbReference type="InterPro" id="IPR002669">
    <property type="entry name" value="UreD"/>
</dbReference>
<dbReference type="PANTHER" id="PTHR33643">
    <property type="entry name" value="UREASE ACCESSORY PROTEIN D"/>
    <property type="match status" value="1"/>
</dbReference>
<dbReference type="PANTHER" id="PTHR33643:SF1">
    <property type="entry name" value="UREASE ACCESSORY PROTEIN D"/>
    <property type="match status" value="1"/>
</dbReference>
<dbReference type="Pfam" id="PF01774">
    <property type="entry name" value="UreD"/>
    <property type="match status" value="1"/>
</dbReference>
<organism>
    <name type="scientific">Yersinia pestis bv. Antiqua (strain Antiqua)</name>
    <dbReference type="NCBI Taxonomy" id="360102"/>
    <lineage>
        <taxon>Bacteria</taxon>
        <taxon>Pseudomonadati</taxon>
        <taxon>Pseudomonadota</taxon>
        <taxon>Gammaproteobacteria</taxon>
        <taxon>Enterobacterales</taxon>
        <taxon>Yersiniaceae</taxon>
        <taxon>Yersinia</taxon>
    </lineage>
</organism>
<keyword id="KW-0143">Chaperone</keyword>
<keyword id="KW-0963">Cytoplasm</keyword>
<keyword id="KW-0996">Nickel insertion</keyword>
<reference key="1">
    <citation type="journal article" date="2006" name="J. Bacteriol.">
        <title>Complete genome sequence of Yersinia pestis strains Antiqua and Nepal516: evidence of gene reduction in an emerging pathogen.</title>
        <authorList>
            <person name="Chain P.S.G."/>
            <person name="Hu P."/>
            <person name="Malfatti S.A."/>
            <person name="Radnedge L."/>
            <person name="Larimer F."/>
            <person name="Vergez L.M."/>
            <person name="Worsham P."/>
            <person name="Chu M.C."/>
            <person name="Andersen G.L."/>
        </authorList>
    </citation>
    <scope>NUCLEOTIDE SEQUENCE [LARGE SCALE GENOMIC DNA]</scope>
    <source>
        <strain>Antiqua</strain>
    </source>
</reference>
<proteinExistence type="inferred from homology"/>
<name>URED_YERPA</name>
<comment type="function">
    <text evidence="1">Required for maturation of urease via the functional incorporation of the urease nickel metallocenter.</text>
</comment>
<comment type="subunit">
    <text evidence="1">UreD, UreF and UreG form a complex that acts as a GTP-hydrolysis-dependent molecular chaperone, activating the urease apoprotein by helping to assemble the nickel containing metallocenter of UreC. The UreE protein probably delivers the nickel.</text>
</comment>
<comment type="subcellular location">
    <subcellularLocation>
        <location evidence="1">Cytoplasm</location>
    </subcellularLocation>
</comment>
<comment type="similarity">
    <text evidence="1">Belongs to the UreD family.</text>
</comment>
<accession>Q1C5A9</accession>
<feature type="chain" id="PRO_1000145102" description="Urease accessory protein UreD">
    <location>
        <begin position="1"/>
        <end position="277"/>
    </location>
</feature>
<sequence>MTAQSQNIVETPSRVRAHALGVNAPELAKYQDEPAQMRSGAVGKSGYLKLRFAKREHCSILAEMERRVPSLVQKALYWDEEIPELPCVTMISTSGCILQGDRLATDVHVEAGACAHVTTQSATKVHMMNANYASQIQNFIVEEGGYLEFMPDPLIPHRNSRFITDTTISIHPTATAIYSEVLMSGRKYHHADERFGFDVYSSRVAAQNLAGKELFVEKYVLEPKVESLDAVGVMQTFDAFGNVILLTPKEHHDRILARVPAHFDIKGGDCQRRDAST</sequence>
<protein>
    <recommendedName>
        <fullName evidence="1">Urease accessory protein UreD</fullName>
    </recommendedName>
</protein>